<gene>
    <name evidence="1" type="primary">groEL</name>
    <name evidence="1" type="synonym">groL</name>
    <name type="ordered locus">ABC0882</name>
</gene>
<sequence>MAKDIQFSEEARRSMLKGVDTLANAVKVTLGPKGRNVVLEKKFGSPLITNDGVTIAKEIELEDAFENMGAKLVAEVASKTNDIAGDGTTTATVLAQAMIREGLKNVTSGANPMGIRKGIEKATAAAVKELKAISKPIEGRESIAQVAAISSADEEVGQIIAEAMERVGNDGVITIEESKGFSTELEVVEGMQFDRGYASPYMVSDSDKMEAVLDNPYVLITDKKITNIQEVLPVLEQVVQQSRPVLIIAEDVEGEALATLVLNKLRGTFNAVAVKAPGFGDRRKAMLEDIAILTGGQVITEDLGLDLKSATIESLGRAAKVVVTKENTTIVEGAGDPEQISGRVNQLKAQVEETTSEFDKEKLQERLAKLAGGVAVLKVGAATETEMKERKLRIEDALNSTRAAVEEGIVAGGGTALVNVIKAVKAVDATGDEATGVNIVLRALEEPVRQIAHNAGLEGSIIVEKLKAEEVGVGYNAATGEYVNMVETGILDPVKVTRSALQNAASVSAMFLTTEAVIADKPEENAGGADMGGMGGMGGGMPGMM</sequence>
<protein>
    <recommendedName>
        <fullName evidence="1">Chaperonin GroEL</fullName>
        <ecNumber evidence="1">5.6.1.7</ecNumber>
    </recommendedName>
    <alternativeName>
        <fullName evidence="1">60 kDa chaperonin</fullName>
    </alternativeName>
    <alternativeName>
        <fullName evidence="1">Chaperonin-60</fullName>
        <shortName evidence="1">Cpn60</shortName>
    </alternativeName>
</protein>
<feature type="chain" id="PRO_0000063277" description="Chaperonin GroEL">
    <location>
        <begin position="1"/>
        <end position="545"/>
    </location>
</feature>
<feature type="binding site" evidence="1">
    <location>
        <begin position="29"/>
        <end position="32"/>
    </location>
    <ligand>
        <name>ATP</name>
        <dbReference type="ChEBI" id="CHEBI:30616"/>
    </ligand>
</feature>
<feature type="binding site" evidence="1">
    <location>
        <begin position="86"/>
        <end position="90"/>
    </location>
    <ligand>
        <name>ATP</name>
        <dbReference type="ChEBI" id="CHEBI:30616"/>
    </ligand>
</feature>
<feature type="binding site" evidence="1">
    <location>
        <position position="413"/>
    </location>
    <ligand>
        <name>ATP</name>
        <dbReference type="ChEBI" id="CHEBI:30616"/>
    </ligand>
</feature>
<feature type="binding site" evidence="1">
    <location>
        <begin position="476"/>
        <end position="478"/>
    </location>
    <ligand>
        <name>ATP</name>
        <dbReference type="ChEBI" id="CHEBI:30616"/>
    </ligand>
</feature>
<feature type="binding site" evidence="1">
    <location>
        <position position="492"/>
    </location>
    <ligand>
        <name>ATP</name>
        <dbReference type="ChEBI" id="CHEBI:30616"/>
    </ligand>
</feature>
<keyword id="KW-0067">ATP-binding</keyword>
<keyword id="KW-0143">Chaperone</keyword>
<keyword id="KW-0963">Cytoplasm</keyword>
<keyword id="KW-0413">Isomerase</keyword>
<keyword id="KW-0547">Nucleotide-binding</keyword>
<keyword id="KW-1185">Reference proteome</keyword>
<dbReference type="EC" id="5.6.1.7" evidence="1"/>
<dbReference type="EMBL" id="AP006627">
    <property type="protein sequence ID" value="BAD63421.1"/>
    <property type="molecule type" value="Genomic_DNA"/>
</dbReference>
<dbReference type="RefSeq" id="WP_011245737.1">
    <property type="nucleotide sequence ID" value="NC_006582.1"/>
</dbReference>
<dbReference type="SMR" id="Q5WJN4"/>
<dbReference type="STRING" id="66692.ABC0882"/>
<dbReference type="KEGG" id="bcl:ABC0882"/>
<dbReference type="eggNOG" id="COG0459">
    <property type="taxonomic scope" value="Bacteria"/>
</dbReference>
<dbReference type="HOGENOM" id="CLU_016503_3_0_9"/>
<dbReference type="OrthoDB" id="9766614at2"/>
<dbReference type="Proteomes" id="UP000001168">
    <property type="component" value="Chromosome"/>
</dbReference>
<dbReference type="GO" id="GO:0005737">
    <property type="term" value="C:cytoplasm"/>
    <property type="evidence" value="ECO:0007669"/>
    <property type="project" value="UniProtKB-SubCell"/>
</dbReference>
<dbReference type="GO" id="GO:0005524">
    <property type="term" value="F:ATP binding"/>
    <property type="evidence" value="ECO:0007669"/>
    <property type="project" value="UniProtKB-UniRule"/>
</dbReference>
<dbReference type="GO" id="GO:0140662">
    <property type="term" value="F:ATP-dependent protein folding chaperone"/>
    <property type="evidence" value="ECO:0007669"/>
    <property type="project" value="InterPro"/>
</dbReference>
<dbReference type="GO" id="GO:0016853">
    <property type="term" value="F:isomerase activity"/>
    <property type="evidence" value="ECO:0007669"/>
    <property type="project" value="UniProtKB-KW"/>
</dbReference>
<dbReference type="GO" id="GO:0051082">
    <property type="term" value="F:unfolded protein binding"/>
    <property type="evidence" value="ECO:0007669"/>
    <property type="project" value="UniProtKB-UniRule"/>
</dbReference>
<dbReference type="GO" id="GO:0042026">
    <property type="term" value="P:protein refolding"/>
    <property type="evidence" value="ECO:0007669"/>
    <property type="project" value="UniProtKB-UniRule"/>
</dbReference>
<dbReference type="CDD" id="cd03344">
    <property type="entry name" value="GroEL"/>
    <property type="match status" value="1"/>
</dbReference>
<dbReference type="FunFam" id="1.10.560.10:FF:000001">
    <property type="entry name" value="60 kDa chaperonin"/>
    <property type="match status" value="1"/>
</dbReference>
<dbReference type="FunFam" id="3.50.7.10:FF:000001">
    <property type="entry name" value="60 kDa chaperonin"/>
    <property type="match status" value="1"/>
</dbReference>
<dbReference type="Gene3D" id="3.50.7.10">
    <property type="entry name" value="GroEL"/>
    <property type="match status" value="1"/>
</dbReference>
<dbReference type="Gene3D" id="1.10.560.10">
    <property type="entry name" value="GroEL-like equatorial domain"/>
    <property type="match status" value="1"/>
</dbReference>
<dbReference type="Gene3D" id="3.30.260.10">
    <property type="entry name" value="TCP-1-like chaperonin intermediate domain"/>
    <property type="match status" value="1"/>
</dbReference>
<dbReference type="HAMAP" id="MF_00600">
    <property type="entry name" value="CH60"/>
    <property type="match status" value="1"/>
</dbReference>
<dbReference type="InterPro" id="IPR018370">
    <property type="entry name" value="Chaperonin_Cpn60_CS"/>
</dbReference>
<dbReference type="InterPro" id="IPR001844">
    <property type="entry name" value="Cpn60/GroEL"/>
</dbReference>
<dbReference type="InterPro" id="IPR002423">
    <property type="entry name" value="Cpn60/GroEL/TCP-1"/>
</dbReference>
<dbReference type="InterPro" id="IPR027409">
    <property type="entry name" value="GroEL-like_apical_dom_sf"/>
</dbReference>
<dbReference type="InterPro" id="IPR027413">
    <property type="entry name" value="GROEL-like_equatorial_sf"/>
</dbReference>
<dbReference type="InterPro" id="IPR027410">
    <property type="entry name" value="TCP-1-like_intermed_sf"/>
</dbReference>
<dbReference type="NCBIfam" id="TIGR02348">
    <property type="entry name" value="GroEL"/>
    <property type="match status" value="1"/>
</dbReference>
<dbReference type="NCBIfam" id="NF000592">
    <property type="entry name" value="PRK00013.1"/>
    <property type="match status" value="1"/>
</dbReference>
<dbReference type="NCBIfam" id="NF009487">
    <property type="entry name" value="PRK12849.1"/>
    <property type="match status" value="1"/>
</dbReference>
<dbReference type="NCBIfam" id="NF009488">
    <property type="entry name" value="PRK12850.1"/>
    <property type="match status" value="1"/>
</dbReference>
<dbReference type="NCBIfam" id="NF009489">
    <property type="entry name" value="PRK12851.1"/>
    <property type="match status" value="1"/>
</dbReference>
<dbReference type="PANTHER" id="PTHR45633">
    <property type="entry name" value="60 KDA HEAT SHOCK PROTEIN, MITOCHONDRIAL"/>
    <property type="match status" value="1"/>
</dbReference>
<dbReference type="Pfam" id="PF00118">
    <property type="entry name" value="Cpn60_TCP1"/>
    <property type="match status" value="1"/>
</dbReference>
<dbReference type="PRINTS" id="PR00298">
    <property type="entry name" value="CHAPERONIN60"/>
</dbReference>
<dbReference type="SUPFAM" id="SSF52029">
    <property type="entry name" value="GroEL apical domain-like"/>
    <property type="match status" value="1"/>
</dbReference>
<dbReference type="SUPFAM" id="SSF48592">
    <property type="entry name" value="GroEL equatorial domain-like"/>
    <property type="match status" value="1"/>
</dbReference>
<dbReference type="SUPFAM" id="SSF54849">
    <property type="entry name" value="GroEL-intermediate domain like"/>
    <property type="match status" value="1"/>
</dbReference>
<dbReference type="PROSITE" id="PS00296">
    <property type="entry name" value="CHAPERONINS_CPN60"/>
    <property type="match status" value="1"/>
</dbReference>
<evidence type="ECO:0000255" key="1">
    <source>
        <dbReference type="HAMAP-Rule" id="MF_00600"/>
    </source>
</evidence>
<name>CH60_SHOC1</name>
<comment type="function">
    <text evidence="1">Together with its co-chaperonin GroES, plays an essential role in assisting protein folding. The GroEL-GroES system forms a nano-cage that allows encapsulation of the non-native substrate proteins and provides a physical environment optimized to promote and accelerate protein folding.</text>
</comment>
<comment type="catalytic activity">
    <reaction evidence="1">
        <text>ATP + H2O + a folded polypeptide = ADP + phosphate + an unfolded polypeptide.</text>
        <dbReference type="EC" id="5.6.1.7"/>
    </reaction>
</comment>
<comment type="subunit">
    <text evidence="1">Forms a cylinder of 14 subunits composed of two heptameric rings stacked back-to-back. Interacts with the co-chaperonin GroES.</text>
</comment>
<comment type="subcellular location">
    <subcellularLocation>
        <location evidence="1">Cytoplasm</location>
    </subcellularLocation>
</comment>
<comment type="similarity">
    <text evidence="1">Belongs to the chaperonin (HSP60) family.</text>
</comment>
<reference key="1">
    <citation type="submission" date="2003-10" db="EMBL/GenBank/DDBJ databases">
        <title>The complete genome sequence of the alkaliphilic Bacillus clausii KSM-K16.</title>
        <authorList>
            <person name="Takaki Y."/>
            <person name="Kageyama Y."/>
            <person name="Shimamura S."/>
            <person name="Suzuki H."/>
            <person name="Nishi S."/>
            <person name="Hatada Y."/>
            <person name="Kawai S."/>
            <person name="Ito S."/>
            <person name="Horikoshi K."/>
        </authorList>
    </citation>
    <scope>NUCLEOTIDE SEQUENCE [LARGE SCALE GENOMIC DNA]</scope>
    <source>
        <strain>KSM-K16</strain>
    </source>
</reference>
<accession>Q5WJN4</accession>
<organism>
    <name type="scientific">Shouchella clausii (strain KSM-K16)</name>
    <name type="common">Alkalihalobacillus clausii</name>
    <dbReference type="NCBI Taxonomy" id="66692"/>
    <lineage>
        <taxon>Bacteria</taxon>
        <taxon>Bacillati</taxon>
        <taxon>Bacillota</taxon>
        <taxon>Bacilli</taxon>
        <taxon>Bacillales</taxon>
        <taxon>Bacillaceae</taxon>
        <taxon>Shouchella</taxon>
    </lineage>
</organism>
<proteinExistence type="inferred from homology"/>